<feature type="chain" id="PRO_1000143867" description="Large ribosomal subunit protein bL21">
    <location>
        <begin position="1"/>
        <end position="104"/>
    </location>
</feature>
<reference key="1">
    <citation type="journal article" date="2008" name="Proc. Natl. Acad. Sci. U.S.A.">
        <title>Complete genome of the uncultured termite group 1 bacteria in a single host protist cell.</title>
        <authorList>
            <person name="Hongoh Y."/>
            <person name="Sharma V.K."/>
            <person name="Prakash T."/>
            <person name="Noda S."/>
            <person name="Taylor T.D."/>
            <person name="Kudo T."/>
            <person name="Sakaki Y."/>
            <person name="Toyoda A."/>
            <person name="Hattori M."/>
            <person name="Ohkuma M."/>
        </authorList>
    </citation>
    <scope>NUCLEOTIDE SEQUENCE [LARGE SCALE GENOMIC DNA]</scope>
</reference>
<proteinExistence type="inferred from homology"/>
<accession>B1H0I6</accession>
<name>RL21_ENDTX</name>
<dbReference type="EMBL" id="AP009510">
    <property type="protein sequence ID" value="BAG14018.1"/>
    <property type="molecule type" value="Genomic_DNA"/>
</dbReference>
<dbReference type="RefSeq" id="WP_015423543.1">
    <property type="nucleotide sequence ID" value="NC_020419.1"/>
</dbReference>
<dbReference type="SMR" id="B1H0I6"/>
<dbReference type="STRING" id="471821.TGRD_535"/>
<dbReference type="KEGG" id="eti:RSTT_502"/>
<dbReference type="KEGG" id="rsd:TGRD_535"/>
<dbReference type="PATRIC" id="fig|471821.5.peg.872"/>
<dbReference type="HOGENOM" id="CLU_061463_3_3_0"/>
<dbReference type="OrthoDB" id="9813334at2"/>
<dbReference type="Proteomes" id="UP000001691">
    <property type="component" value="Chromosome"/>
</dbReference>
<dbReference type="GO" id="GO:0005737">
    <property type="term" value="C:cytoplasm"/>
    <property type="evidence" value="ECO:0007669"/>
    <property type="project" value="UniProtKB-ARBA"/>
</dbReference>
<dbReference type="GO" id="GO:1990904">
    <property type="term" value="C:ribonucleoprotein complex"/>
    <property type="evidence" value="ECO:0007669"/>
    <property type="project" value="UniProtKB-KW"/>
</dbReference>
<dbReference type="GO" id="GO:0005840">
    <property type="term" value="C:ribosome"/>
    <property type="evidence" value="ECO:0007669"/>
    <property type="project" value="UniProtKB-KW"/>
</dbReference>
<dbReference type="GO" id="GO:0019843">
    <property type="term" value="F:rRNA binding"/>
    <property type="evidence" value="ECO:0007669"/>
    <property type="project" value="UniProtKB-UniRule"/>
</dbReference>
<dbReference type="GO" id="GO:0003735">
    <property type="term" value="F:structural constituent of ribosome"/>
    <property type="evidence" value="ECO:0007669"/>
    <property type="project" value="InterPro"/>
</dbReference>
<dbReference type="GO" id="GO:0006412">
    <property type="term" value="P:translation"/>
    <property type="evidence" value="ECO:0007669"/>
    <property type="project" value="UniProtKB-UniRule"/>
</dbReference>
<dbReference type="HAMAP" id="MF_01363">
    <property type="entry name" value="Ribosomal_bL21"/>
    <property type="match status" value="1"/>
</dbReference>
<dbReference type="InterPro" id="IPR028909">
    <property type="entry name" value="bL21-like"/>
</dbReference>
<dbReference type="InterPro" id="IPR036164">
    <property type="entry name" value="bL21-like_sf"/>
</dbReference>
<dbReference type="InterPro" id="IPR001787">
    <property type="entry name" value="Ribosomal_bL21"/>
</dbReference>
<dbReference type="InterPro" id="IPR018258">
    <property type="entry name" value="Ribosomal_bL21_CS"/>
</dbReference>
<dbReference type="NCBIfam" id="TIGR00061">
    <property type="entry name" value="L21"/>
    <property type="match status" value="1"/>
</dbReference>
<dbReference type="PANTHER" id="PTHR21349">
    <property type="entry name" value="50S RIBOSOMAL PROTEIN L21"/>
    <property type="match status" value="1"/>
</dbReference>
<dbReference type="PANTHER" id="PTHR21349:SF0">
    <property type="entry name" value="LARGE RIBOSOMAL SUBUNIT PROTEIN BL21M"/>
    <property type="match status" value="1"/>
</dbReference>
<dbReference type="Pfam" id="PF00829">
    <property type="entry name" value="Ribosomal_L21p"/>
    <property type="match status" value="1"/>
</dbReference>
<dbReference type="SUPFAM" id="SSF141091">
    <property type="entry name" value="L21p-like"/>
    <property type="match status" value="1"/>
</dbReference>
<dbReference type="PROSITE" id="PS01169">
    <property type="entry name" value="RIBOSOMAL_L21"/>
    <property type="match status" value="1"/>
</dbReference>
<gene>
    <name evidence="1" type="primary">rplU</name>
    <name type="ordered locus">TGRD_535</name>
</gene>
<sequence length="104" mass="11530">MYAIIKTGGKQYKVEKGVSLVVEKLKGVEAGQEVILREVLLLADGEKLTVGKPIIESARVVAKVVSQKRGPKVLVFKRKPKKGYKKLQGHRQYVTELEITGINT</sequence>
<protein>
    <recommendedName>
        <fullName evidence="1">Large ribosomal subunit protein bL21</fullName>
    </recommendedName>
    <alternativeName>
        <fullName evidence="2">50S ribosomal protein L21</fullName>
    </alternativeName>
</protein>
<organism>
    <name type="scientific">Endomicrobium trichonymphae</name>
    <dbReference type="NCBI Taxonomy" id="1408204"/>
    <lineage>
        <taxon>Bacteria</taxon>
        <taxon>Pseudomonadati</taxon>
        <taxon>Elusimicrobiota</taxon>
        <taxon>Endomicrobiia</taxon>
        <taxon>Endomicrobiales</taxon>
        <taxon>Endomicrobiaceae</taxon>
        <taxon>Candidatus Endomicrobiellum</taxon>
    </lineage>
</organism>
<evidence type="ECO:0000255" key="1">
    <source>
        <dbReference type="HAMAP-Rule" id="MF_01363"/>
    </source>
</evidence>
<evidence type="ECO:0000305" key="2"/>
<comment type="function">
    <text evidence="1">This protein binds to 23S rRNA in the presence of protein L20.</text>
</comment>
<comment type="subunit">
    <text evidence="1">Part of the 50S ribosomal subunit. Contacts protein L20.</text>
</comment>
<comment type="similarity">
    <text evidence="1">Belongs to the bacterial ribosomal protein bL21 family.</text>
</comment>
<keyword id="KW-0687">Ribonucleoprotein</keyword>
<keyword id="KW-0689">Ribosomal protein</keyword>
<keyword id="KW-0694">RNA-binding</keyword>
<keyword id="KW-0699">rRNA-binding</keyword>